<comment type="function">
    <text evidence="1">May act as a transcriptional repressor of multidrug resistance genes.</text>
</comment>
<comment type="subcellular location">
    <subcellularLocation>
        <location evidence="4">Nucleus</location>
    </subcellularLocation>
</comment>
<proteinExistence type="inferred from homology"/>
<organism>
    <name type="scientific">Gibberella zeae (strain ATCC MYA-4620 / CBS 123657 / FGSC 9075 / NRRL 31084 / PH-1)</name>
    <name type="common">Wheat head blight fungus</name>
    <name type="synonym">Fusarium graminearum</name>
    <dbReference type="NCBI Taxonomy" id="229533"/>
    <lineage>
        <taxon>Eukaryota</taxon>
        <taxon>Fungi</taxon>
        <taxon>Dikarya</taxon>
        <taxon>Ascomycota</taxon>
        <taxon>Pezizomycotina</taxon>
        <taxon>Sordariomycetes</taxon>
        <taxon>Hypocreomycetidae</taxon>
        <taxon>Hypocreales</taxon>
        <taxon>Nectriaceae</taxon>
        <taxon>Fusarium</taxon>
    </lineage>
</organism>
<gene>
    <name type="primary">RDR1</name>
    <name type="ORF">FGRRES_09333</name>
    <name type="ORF">FGSG_09333</name>
</gene>
<accession>Q4I0C5</accession>
<accession>A0A0E0S8N0</accession>
<accession>V6RVB5</accession>
<reference key="1">
    <citation type="journal article" date="2007" name="Science">
        <title>The Fusarium graminearum genome reveals a link between localized polymorphism and pathogen specialization.</title>
        <authorList>
            <person name="Cuomo C.A."/>
            <person name="Gueldener U."/>
            <person name="Xu J.-R."/>
            <person name="Trail F."/>
            <person name="Turgeon B.G."/>
            <person name="Di Pietro A."/>
            <person name="Walton J.D."/>
            <person name="Ma L.-J."/>
            <person name="Baker S.E."/>
            <person name="Rep M."/>
            <person name="Adam G."/>
            <person name="Antoniw J."/>
            <person name="Baldwin T."/>
            <person name="Calvo S.E."/>
            <person name="Chang Y.-L."/>
            <person name="DeCaprio D."/>
            <person name="Gale L.R."/>
            <person name="Gnerre S."/>
            <person name="Goswami R.S."/>
            <person name="Hammond-Kosack K."/>
            <person name="Harris L.J."/>
            <person name="Hilburn K."/>
            <person name="Kennell J.C."/>
            <person name="Kroken S."/>
            <person name="Magnuson J.K."/>
            <person name="Mannhaupt G."/>
            <person name="Mauceli E.W."/>
            <person name="Mewes H.-W."/>
            <person name="Mitterbauer R."/>
            <person name="Muehlbauer G."/>
            <person name="Muensterkoetter M."/>
            <person name="Nelson D."/>
            <person name="O'Donnell K."/>
            <person name="Ouellet T."/>
            <person name="Qi W."/>
            <person name="Quesneville H."/>
            <person name="Roncero M.I.G."/>
            <person name="Seong K.-Y."/>
            <person name="Tetko I.V."/>
            <person name="Urban M."/>
            <person name="Waalwijk C."/>
            <person name="Ward T.J."/>
            <person name="Yao J."/>
            <person name="Birren B.W."/>
            <person name="Kistler H.C."/>
        </authorList>
    </citation>
    <scope>NUCLEOTIDE SEQUENCE [LARGE SCALE GENOMIC DNA]</scope>
    <source>
        <strain>ATCC MYA-4620 / CBS 123657 / FGSC 9075 / NRRL 31084 / PH-1</strain>
    </source>
</reference>
<reference key="2">
    <citation type="journal article" date="2010" name="Nature">
        <title>Comparative genomics reveals mobile pathogenicity chromosomes in Fusarium.</title>
        <authorList>
            <person name="Ma L.-J."/>
            <person name="van der Does H.C."/>
            <person name="Borkovich K.A."/>
            <person name="Coleman J.J."/>
            <person name="Daboussi M.-J."/>
            <person name="Di Pietro A."/>
            <person name="Dufresne M."/>
            <person name="Freitag M."/>
            <person name="Grabherr M."/>
            <person name="Henrissat B."/>
            <person name="Houterman P.M."/>
            <person name="Kang S."/>
            <person name="Shim W.-B."/>
            <person name="Woloshuk C."/>
            <person name="Xie X."/>
            <person name="Xu J.-R."/>
            <person name="Antoniw J."/>
            <person name="Baker S.E."/>
            <person name="Bluhm B.H."/>
            <person name="Breakspear A."/>
            <person name="Brown D.W."/>
            <person name="Butchko R.A.E."/>
            <person name="Chapman S."/>
            <person name="Coulson R."/>
            <person name="Coutinho P.M."/>
            <person name="Danchin E.G.J."/>
            <person name="Diener A."/>
            <person name="Gale L.R."/>
            <person name="Gardiner D.M."/>
            <person name="Goff S."/>
            <person name="Hammond-Kosack K.E."/>
            <person name="Hilburn K."/>
            <person name="Hua-Van A."/>
            <person name="Jonkers W."/>
            <person name="Kazan K."/>
            <person name="Kodira C.D."/>
            <person name="Koehrsen M."/>
            <person name="Kumar L."/>
            <person name="Lee Y.-H."/>
            <person name="Li L."/>
            <person name="Manners J.M."/>
            <person name="Miranda-Saavedra D."/>
            <person name="Mukherjee M."/>
            <person name="Park G."/>
            <person name="Park J."/>
            <person name="Park S.-Y."/>
            <person name="Proctor R.H."/>
            <person name="Regev A."/>
            <person name="Ruiz-Roldan M.C."/>
            <person name="Sain D."/>
            <person name="Sakthikumar S."/>
            <person name="Sykes S."/>
            <person name="Schwartz D.C."/>
            <person name="Turgeon B.G."/>
            <person name="Wapinski I."/>
            <person name="Yoder O."/>
            <person name="Young S."/>
            <person name="Zeng Q."/>
            <person name="Zhou S."/>
            <person name="Galagan J."/>
            <person name="Cuomo C.A."/>
            <person name="Kistler H.C."/>
            <person name="Rep M."/>
        </authorList>
    </citation>
    <scope>GENOME REANNOTATION</scope>
    <source>
        <strain>ATCC MYA-4620 / CBS 123657 / FGSC 9075 / NRRL 31084 / PH-1</strain>
    </source>
</reference>
<reference key="3">
    <citation type="journal article" date="2015" name="BMC Genomics">
        <title>The completed genome sequence of the pathogenic ascomycete fungus Fusarium graminearum.</title>
        <authorList>
            <person name="King R."/>
            <person name="Urban M."/>
            <person name="Hammond-Kosack M.C.U."/>
            <person name="Hassani-Pak K."/>
            <person name="Hammond-Kosack K.E."/>
        </authorList>
    </citation>
    <scope>NUCLEOTIDE SEQUENCE [LARGE SCALE GENOMIC DNA]</scope>
    <source>
        <strain>ATCC MYA-4620 / CBS 123657 / FGSC 9075 / NRRL 31084 / PH-1</strain>
    </source>
</reference>
<dbReference type="EMBL" id="DS231668">
    <property type="protein sequence ID" value="ESU15895.1"/>
    <property type="molecule type" value="Genomic_DNA"/>
</dbReference>
<dbReference type="EMBL" id="HG970335">
    <property type="protein sequence ID" value="CEF82793.1"/>
    <property type="molecule type" value="Genomic_DNA"/>
</dbReference>
<dbReference type="RefSeq" id="XP_011328421.1">
    <property type="nucleotide sequence ID" value="XM_011330119.1"/>
</dbReference>
<dbReference type="SMR" id="Q4I0C5"/>
<dbReference type="FunCoup" id="Q4I0C5">
    <property type="interactions" value="172"/>
</dbReference>
<dbReference type="STRING" id="229533.Q4I0C5"/>
<dbReference type="GeneID" id="23556290"/>
<dbReference type="KEGG" id="fgr:FGSG_09333"/>
<dbReference type="VEuPathDB" id="FungiDB:FGRAMPH1_01G27349"/>
<dbReference type="eggNOG" id="ENOG502SHMG">
    <property type="taxonomic scope" value="Eukaryota"/>
</dbReference>
<dbReference type="HOGENOM" id="CLU_019691_1_0_1"/>
<dbReference type="InParanoid" id="Q4I0C5"/>
<dbReference type="OrthoDB" id="62979at110618"/>
<dbReference type="PHI-base" id="PHI:1764"/>
<dbReference type="Proteomes" id="UP000070720">
    <property type="component" value="Chromosome 4"/>
</dbReference>
<dbReference type="GO" id="GO:0005634">
    <property type="term" value="C:nucleus"/>
    <property type="evidence" value="ECO:0007669"/>
    <property type="project" value="UniProtKB-SubCell"/>
</dbReference>
<dbReference type="GO" id="GO:0003677">
    <property type="term" value="F:DNA binding"/>
    <property type="evidence" value="ECO:0007669"/>
    <property type="project" value="UniProtKB-KW"/>
</dbReference>
<dbReference type="GO" id="GO:0000981">
    <property type="term" value="F:DNA-binding transcription factor activity, RNA polymerase II-specific"/>
    <property type="evidence" value="ECO:0007669"/>
    <property type="project" value="InterPro"/>
</dbReference>
<dbReference type="GO" id="GO:0008270">
    <property type="term" value="F:zinc ion binding"/>
    <property type="evidence" value="ECO:0007669"/>
    <property type="project" value="InterPro"/>
</dbReference>
<dbReference type="GO" id="GO:0006351">
    <property type="term" value="P:DNA-templated transcription"/>
    <property type="evidence" value="ECO:0007669"/>
    <property type="project" value="InterPro"/>
</dbReference>
<dbReference type="GO" id="GO:0009410">
    <property type="term" value="P:response to xenobiotic stimulus"/>
    <property type="evidence" value="ECO:0007669"/>
    <property type="project" value="TreeGrafter"/>
</dbReference>
<dbReference type="CDD" id="cd12148">
    <property type="entry name" value="fungal_TF_MHR"/>
    <property type="match status" value="1"/>
</dbReference>
<dbReference type="CDD" id="cd00067">
    <property type="entry name" value="GAL4"/>
    <property type="match status" value="1"/>
</dbReference>
<dbReference type="Gene3D" id="4.10.240.10">
    <property type="entry name" value="Zn(2)-C6 fungal-type DNA-binding domain"/>
    <property type="match status" value="1"/>
</dbReference>
<dbReference type="InterPro" id="IPR052478">
    <property type="entry name" value="Metabolite_Synth_Reg"/>
</dbReference>
<dbReference type="InterPro" id="IPR007219">
    <property type="entry name" value="Transcription_factor_dom_fun"/>
</dbReference>
<dbReference type="InterPro" id="IPR036864">
    <property type="entry name" value="Zn2-C6_fun-type_DNA-bd_sf"/>
</dbReference>
<dbReference type="InterPro" id="IPR001138">
    <property type="entry name" value="Zn2Cys6_DnaBD"/>
</dbReference>
<dbReference type="PANTHER" id="PTHR31779">
    <property type="entry name" value="2-NITROPROPANE DIOXYGENASE FAMILY, PUTATIVE (AFU_ORTHOLOGUE AFUA_2G17430)-RELATED"/>
    <property type="match status" value="1"/>
</dbReference>
<dbReference type="PANTHER" id="PTHR31779:SF5">
    <property type="entry name" value="ZN(II)2CYS6 TRANSCRIPTION FACTOR (EUROFUNG)"/>
    <property type="match status" value="1"/>
</dbReference>
<dbReference type="Pfam" id="PF04082">
    <property type="entry name" value="Fungal_trans"/>
    <property type="match status" value="1"/>
</dbReference>
<dbReference type="Pfam" id="PF00172">
    <property type="entry name" value="Zn_clus"/>
    <property type="match status" value="1"/>
</dbReference>
<dbReference type="SMART" id="SM00066">
    <property type="entry name" value="GAL4"/>
    <property type="match status" value="1"/>
</dbReference>
<dbReference type="SUPFAM" id="SSF57701">
    <property type="entry name" value="Zn2/Cys6 DNA-binding domain"/>
    <property type="match status" value="1"/>
</dbReference>
<dbReference type="PROSITE" id="PS00463">
    <property type="entry name" value="ZN2_CY6_FUNGAL_1"/>
    <property type="match status" value="1"/>
</dbReference>
<dbReference type="PROSITE" id="PS50048">
    <property type="entry name" value="ZN2_CY6_FUNGAL_2"/>
    <property type="match status" value="1"/>
</dbReference>
<protein>
    <recommendedName>
        <fullName>Protein RDR1</fullName>
    </recommendedName>
</protein>
<sequence length="544" mass="61467">MSSTQGRKRSRLACETCRELKRKCDGNQPCGACVRFEYDCIYNKQTNTNKRRKTVEQDKEAPLPSPPVHVDKDARPYVTSPHHLQSLEANSGAAFFRRLALRLDPKNAPRMHTFSWNAFLGARRTSQVPVSRPVTEMLSQEGMESLSEIYFEKLDPIYGFIDRDWISRITQNRWSGLICDESEDAVLCGIAAIACLFSEVEPLPLELDLIESARFILEQNMSDTPSVTGVTGWLLRVIYLRTAETPHTAWMASSILMHMLEAAGLHCEPSEESVFQVAEEKVDSELRRRLFAVSAHLNIWISFDMGRSRTILCNSTLEMPSTREGDYTIEIMELLPYSTDLDPHKTHDAAELEASLSTVLKRVHSVPPSIMAQCNLTLCLCRRLQSMNTSFTGKTLEQILSITQRGIEAAQAIIDARAPWHQMANVPFQIICLLLAIDTRESLAQLNDAMQCLNNIATVYNTNATKEALNTASLLILMQQRRKEKCASNLSNIVKSFPILPLSETQVEAPLQQMDDMRWFNNLAGELSGFDYSDLDRFLSQSMF</sequence>
<feature type="chain" id="PRO_0000114971" description="Protein RDR1">
    <location>
        <begin position="1"/>
        <end position="544"/>
    </location>
</feature>
<feature type="DNA-binding region" description="Zn(2)-C6 fungal-type" evidence="2">
    <location>
        <begin position="14"/>
        <end position="40"/>
    </location>
</feature>
<feature type="region of interest" description="Disordered" evidence="3">
    <location>
        <begin position="50"/>
        <end position="71"/>
    </location>
</feature>
<evidence type="ECO:0000250" key="1"/>
<evidence type="ECO:0000255" key="2">
    <source>
        <dbReference type="PROSITE-ProRule" id="PRU00227"/>
    </source>
</evidence>
<evidence type="ECO:0000256" key="3">
    <source>
        <dbReference type="SAM" id="MobiDB-lite"/>
    </source>
</evidence>
<evidence type="ECO:0000305" key="4"/>
<name>RDR1_GIBZE</name>
<keyword id="KW-0238">DNA-binding</keyword>
<keyword id="KW-0479">Metal-binding</keyword>
<keyword id="KW-0539">Nucleus</keyword>
<keyword id="KW-1185">Reference proteome</keyword>
<keyword id="KW-0804">Transcription</keyword>
<keyword id="KW-0805">Transcription regulation</keyword>
<keyword id="KW-0862">Zinc</keyword>